<dbReference type="EMBL" id="AE017321">
    <property type="protein sequence ID" value="AAW70865.1"/>
    <property type="molecule type" value="Genomic_DNA"/>
</dbReference>
<dbReference type="RefSeq" id="WP_011256475.1">
    <property type="nucleotide sequence ID" value="NC_006833.1"/>
</dbReference>
<dbReference type="SMR" id="Q5GT09"/>
<dbReference type="STRING" id="292805.Wbm0276"/>
<dbReference type="KEGG" id="wbm:Wbm0276"/>
<dbReference type="eggNOG" id="COG0593">
    <property type="taxonomic scope" value="Bacteria"/>
</dbReference>
<dbReference type="HOGENOM" id="CLU_026910_3_0_5"/>
<dbReference type="Proteomes" id="UP000000534">
    <property type="component" value="Chromosome"/>
</dbReference>
<dbReference type="GO" id="GO:0005737">
    <property type="term" value="C:cytoplasm"/>
    <property type="evidence" value="ECO:0007669"/>
    <property type="project" value="UniProtKB-SubCell"/>
</dbReference>
<dbReference type="GO" id="GO:0005886">
    <property type="term" value="C:plasma membrane"/>
    <property type="evidence" value="ECO:0007669"/>
    <property type="project" value="TreeGrafter"/>
</dbReference>
<dbReference type="GO" id="GO:0005524">
    <property type="term" value="F:ATP binding"/>
    <property type="evidence" value="ECO:0007669"/>
    <property type="project" value="UniProtKB-UniRule"/>
</dbReference>
<dbReference type="GO" id="GO:0016887">
    <property type="term" value="F:ATP hydrolysis activity"/>
    <property type="evidence" value="ECO:0007669"/>
    <property type="project" value="InterPro"/>
</dbReference>
<dbReference type="GO" id="GO:0003688">
    <property type="term" value="F:DNA replication origin binding"/>
    <property type="evidence" value="ECO:0007669"/>
    <property type="project" value="UniProtKB-UniRule"/>
</dbReference>
<dbReference type="GO" id="GO:0008289">
    <property type="term" value="F:lipid binding"/>
    <property type="evidence" value="ECO:0007669"/>
    <property type="project" value="UniProtKB-KW"/>
</dbReference>
<dbReference type="GO" id="GO:0006270">
    <property type="term" value="P:DNA replication initiation"/>
    <property type="evidence" value="ECO:0007669"/>
    <property type="project" value="UniProtKB-UniRule"/>
</dbReference>
<dbReference type="GO" id="GO:0006275">
    <property type="term" value="P:regulation of DNA replication"/>
    <property type="evidence" value="ECO:0007669"/>
    <property type="project" value="UniProtKB-UniRule"/>
</dbReference>
<dbReference type="CDD" id="cd00009">
    <property type="entry name" value="AAA"/>
    <property type="match status" value="1"/>
</dbReference>
<dbReference type="CDD" id="cd06571">
    <property type="entry name" value="Bac_DnaA_C"/>
    <property type="match status" value="1"/>
</dbReference>
<dbReference type="FunFam" id="3.40.50.300:FF:000668">
    <property type="entry name" value="Chromosomal replication initiator protein DnaA"/>
    <property type="match status" value="1"/>
</dbReference>
<dbReference type="Gene3D" id="1.10.1750.10">
    <property type="match status" value="1"/>
</dbReference>
<dbReference type="Gene3D" id="1.10.8.60">
    <property type="match status" value="1"/>
</dbReference>
<dbReference type="Gene3D" id="3.30.300.180">
    <property type="match status" value="1"/>
</dbReference>
<dbReference type="Gene3D" id="3.40.50.300">
    <property type="entry name" value="P-loop containing nucleotide triphosphate hydrolases"/>
    <property type="match status" value="1"/>
</dbReference>
<dbReference type="HAMAP" id="MF_00377">
    <property type="entry name" value="DnaA_bact"/>
    <property type="match status" value="1"/>
</dbReference>
<dbReference type="InterPro" id="IPR003593">
    <property type="entry name" value="AAA+_ATPase"/>
</dbReference>
<dbReference type="InterPro" id="IPR001957">
    <property type="entry name" value="Chromosome_initiator_DnaA"/>
</dbReference>
<dbReference type="InterPro" id="IPR020591">
    <property type="entry name" value="Chromosome_initiator_DnaA-like"/>
</dbReference>
<dbReference type="InterPro" id="IPR018312">
    <property type="entry name" value="Chromosome_initiator_DnaA_CS"/>
</dbReference>
<dbReference type="InterPro" id="IPR013159">
    <property type="entry name" value="DnaA_C"/>
</dbReference>
<dbReference type="InterPro" id="IPR013317">
    <property type="entry name" value="DnaA_dom"/>
</dbReference>
<dbReference type="InterPro" id="IPR024633">
    <property type="entry name" value="DnaA_N_dom"/>
</dbReference>
<dbReference type="InterPro" id="IPR038454">
    <property type="entry name" value="DnaA_N_sf"/>
</dbReference>
<dbReference type="InterPro" id="IPR027417">
    <property type="entry name" value="P-loop_NTPase"/>
</dbReference>
<dbReference type="InterPro" id="IPR010921">
    <property type="entry name" value="Trp_repressor/repl_initiator"/>
</dbReference>
<dbReference type="NCBIfam" id="TIGR00362">
    <property type="entry name" value="DnaA"/>
    <property type="match status" value="1"/>
</dbReference>
<dbReference type="PANTHER" id="PTHR30050">
    <property type="entry name" value="CHROMOSOMAL REPLICATION INITIATOR PROTEIN DNAA"/>
    <property type="match status" value="1"/>
</dbReference>
<dbReference type="PANTHER" id="PTHR30050:SF2">
    <property type="entry name" value="CHROMOSOMAL REPLICATION INITIATOR PROTEIN DNAA"/>
    <property type="match status" value="1"/>
</dbReference>
<dbReference type="Pfam" id="PF00308">
    <property type="entry name" value="Bac_DnaA"/>
    <property type="match status" value="1"/>
</dbReference>
<dbReference type="Pfam" id="PF08299">
    <property type="entry name" value="Bac_DnaA_C"/>
    <property type="match status" value="1"/>
</dbReference>
<dbReference type="Pfam" id="PF11638">
    <property type="entry name" value="DnaA_N"/>
    <property type="match status" value="1"/>
</dbReference>
<dbReference type="PRINTS" id="PR00051">
    <property type="entry name" value="DNAA"/>
</dbReference>
<dbReference type="SMART" id="SM00382">
    <property type="entry name" value="AAA"/>
    <property type="match status" value="1"/>
</dbReference>
<dbReference type="SMART" id="SM00760">
    <property type="entry name" value="Bac_DnaA_C"/>
    <property type="match status" value="1"/>
</dbReference>
<dbReference type="SUPFAM" id="SSF52540">
    <property type="entry name" value="P-loop containing nucleoside triphosphate hydrolases"/>
    <property type="match status" value="1"/>
</dbReference>
<dbReference type="SUPFAM" id="SSF48295">
    <property type="entry name" value="TrpR-like"/>
    <property type="match status" value="1"/>
</dbReference>
<dbReference type="PROSITE" id="PS01008">
    <property type="entry name" value="DNAA"/>
    <property type="match status" value="1"/>
</dbReference>
<protein>
    <recommendedName>
        <fullName evidence="1">Chromosomal replication initiator protein DnaA</fullName>
    </recommendedName>
</protein>
<organism>
    <name type="scientific">Wolbachia sp. subsp. Brugia malayi (strain TRS)</name>
    <dbReference type="NCBI Taxonomy" id="292805"/>
    <lineage>
        <taxon>Bacteria</taxon>
        <taxon>Pseudomonadati</taxon>
        <taxon>Pseudomonadota</taxon>
        <taxon>Alphaproteobacteria</taxon>
        <taxon>Rickettsiales</taxon>
        <taxon>Anaplasmataceae</taxon>
        <taxon>Wolbachieae</taxon>
        <taxon>Wolbachia</taxon>
    </lineage>
</organism>
<accession>Q5GT09</accession>
<sequence>MSLINPKVSAMFFDQIVTATDHNIAWEKIQNLLYNLYGEATYNSWLSSLKFVSSSNGEVLLSVPTRFIKEWITVHYMEKILLLWQNEDKSICSIDIQVTEEKNSSSSIISKNKEESVNNLGSPLDPRFTFDNFVVGKPNELAFTAAKRVAESIDPIPGSNPLFLYGGVGLGKTHLMHAIAWHIVNSPSAKRKVVYLSAEKFMYQYITALRSKDIMLFKEQFRSVDVLMVDDVQFISGKDSTQEEFFHTFNALIDQNKQLVISADRSPSDLDGVEERIKSRLGWGLVADINETTFELRLGILQAKVEQMNMYVPQDVLEFLARNIRSNIRELEGALNKVAHTSLIGRSMTVESASETLMDLLRSNHRSITIAEIQKKIAEFFNIKVTDMHSNRRLRSLVRPRQIAMYFAKKFTHKSLPDIGRSFGGRDHATVIHAVKQIENFIKTDSEFADEINQLRKMFK</sequence>
<feature type="chain" id="PRO_0000114304" description="Chromosomal replication initiator protein DnaA">
    <location>
        <begin position="1"/>
        <end position="460"/>
    </location>
</feature>
<feature type="region of interest" description="Domain I, interacts with DnaA modulators" evidence="1">
    <location>
        <begin position="1"/>
        <end position="91"/>
    </location>
</feature>
<feature type="region of interest" description="Domain II" evidence="1">
    <location>
        <begin position="91"/>
        <end position="122"/>
    </location>
</feature>
<feature type="region of interest" description="Domain III, AAA+ region" evidence="1">
    <location>
        <begin position="123"/>
        <end position="342"/>
    </location>
</feature>
<feature type="region of interest" description="Domain IV, binds dsDNA" evidence="1">
    <location>
        <begin position="343"/>
        <end position="460"/>
    </location>
</feature>
<feature type="binding site" evidence="1">
    <location>
        <position position="169"/>
    </location>
    <ligand>
        <name>ATP</name>
        <dbReference type="ChEBI" id="CHEBI:30616"/>
    </ligand>
</feature>
<feature type="binding site" evidence="1">
    <location>
        <position position="171"/>
    </location>
    <ligand>
        <name>ATP</name>
        <dbReference type="ChEBI" id="CHEBI:30616"/>
    </ligand>
</feature>
<feature type="binding site" evidence="1">
    <location>
        <position position="172"/>
    </location>
    <ligand>
        <name>ATP</name>
        <dbReference type="ChEBI" id="CHEBI:30616"/>
    </ligand>
</feature>
<feature type="binding site" evidence="1">
    <location>
        <position position="173"/>
    </location>
    <ligand>
        <name>ATP</name>
        <dbReference type="ChEBI" id="CHEBI:30616"/>
    </ligand>
</feature>
<proteinExistence type="inferred from homology"/>
<gene>
    <name evidence="1" type="primary">dnaA</name>
    <name type="ordered locus">Wbm0276</name>
</gene>
<reference key="1">
    <citation type="journal article" date="2005" name="PLoS Biol.">
        <title>The Wolbachia genome of Brugia malayi: endosymbiont evolution within a human pathogenic nematode.</title>
        <authorList>
            <person name="Foster J."/>
            <person name="Ganatra M."/>
            <person name="Kamal I."/>
            <person name="Ware J."/>
            <person name="Makarova K."/>
            <person name="Ivanova N."/>
            <person name="Bhattacharyya A."/>
            <person name="Kapatral V."/>
            <person name="Kumar S."/>
            <person name="Posfai J."/>
            <person name="Vincze T."/>
            <person name="Ingram J."/>
            <person name="Moran L."/>
            <person name="Lapidus A."/>
            <person name="Omelchenko M."/>
            <person name="Kyrpides N."/>
            <person name="Ghedin E."/>
            <person name="Wang S."/>
            <person name="Goltsman E."/>
            <person name="Joukov V."/>
            <person name="Ostrovskaya O."/>
            <person name="Tsukerman K."/>
            <person name="Mazur M."/>
            <person name="Comb D."/>
            <person name="Koonin E."/>
            <person name="Slatko B."/>
        </authorList>
    </citation>
    <scope>NUCLEOTIDE SEQUENCE [LARGE SCALE GENOMIC DNA]</scope>
    <source>
        <strain>TRS</strain>
    </source>
</reference>
<name>DNAA_WOLTR</name>
<comment type="function">
    <text evidence="1">Plays an essential role in the initiation and regulation of chromosomal replication. ATP-DnaA binds to the origin of replication (oriC) to initiate formation of the DNA replication initiation complex once per cell cycle. Binds the DnaA box (a 9 base pair repeat at the origin) and separates the double-stranded (ds)DNA. Forms a right-handed helical filament on oriC DNA; dsDNA binds to the exterior of the filament while single-stranded (ss)DNA is stabiized in the filament's interior. The ATP-DnaA-oriC complex binds and stabilizes one strand of the AT-rich DNA unwinding element (DUE), permitting loading of DNA polymerase. After initiation quickly degrades to an ADP-DnaA complex that is not apt for DNA replication. Binds acidic phospholipids.</text>
</comment>
<comment type="subunit">
    <text evidence="1">Oligomerizes as a right-handed, spiral filament on DNA at oriC.</text>
</comment>
<comment type="subcellular location">
    <subcellularLocation>
        <location evidence="1">Cytoplasm</location>
    </subcellularLocation>
</comment>
<comment type="domain">
    <text evidence="1">Domain I is involved in oligomerization and binding regulators, domain II is flexibile and of varying length in different bacteria, domain III forms the AAA+ region, while domain IV binds dsDNA.</text>
</comment>
<comment type="similarity">
    <text evidence="1">Belongs to the DnaA family.</text>
</comment>
<keyword id="KW-0067">ATP-binding</keyword>
<keyword id="KW-0963">Cytoplasm</keyword>
<keyword id="KW-0235">DNA replication</keyword>
<keyword id="KW-0238">DNA-binding</keyword>
<keyword id="KW-0446">Lipid-binding</keyword>
<keyword id="KW-0547">Nucleotide-binding</keyword>
<keyword id="KW-1185">Reference proteome</keyword>
<evidence type="ECO:0000255" key="1">
    <source>
        <dbReference type="HAMAP-Rule" id="MF_00377"/>
    </source>
</evidence>